<reference key="1">
    <citation type="journal article" date="2004" name="Nat. Genet.">
        <title>Evidence in the Legionella pneumophila genome for exploitation of host cell functions and high genome plasticity.</title>
        <authorList>
            <person name="Cazalet C."/>
            <person name="Rusniok C."/>
            <person name="Brueggemann H."/>
            <person name="Zidane N."/>
            <person name="Magnier A."/>
            <person name="Ma L."/>
            <person name="Tichit M."/>
            <person name="Jarraud S."/>
            <person name="Bouchier C."/>
            <person name="Vandenesch F."/>
            <person name="Kunst F."/>
            <person name="Etienne J."/>
            <person name="Glaser P."/>
            <person name="Buchrieser C."/>
        </authorList>
    </citation>
    <scope>NUCLEOTIDE SEQUENCE [LARGE SCALE GENOMIC DNA]</scope>
    <source>
        <strain>Lens</strain>
    </source>
</reference>
<comment type="function">
    <text evidence="1">Converts heme B (protoheme IX) to heme O by substitution of the vinyl group on carbon 2 of heme B porphyrin ring with a hydroxyethyl farnesyl side group.</text>
</comment>
<comment type="catalytic activity">
    <reaction evidence="1">
        <text>heme b + (2E,6E)-farnesyl diphosphate + H2O = Fe(II)-heme o + diphosphate</text>
        <dbReference type="Rhea" id="RHEA:28070"/>
        <dbReference type="ChEBI" id="CHEBI:15377"/>
        <dbReference type="ChEBI" id="CHEBI:33019"/>
        <dbReference type="ChEBI" id="CHEBI:60344"/>
        <dbReference type="ChEBI" id="CHEBI:60530"/>
        <dbReference type="ChEBI" id="CHEBI:175763"/>
        <dbReference type="EC" id="2.5.1.141"/>
    </reaction>
</comment>
<comment type="pathway">
    <text evidence="1">Porphyrin-containing compound metabolism; heme O biosynthesis; heme O from protoheme: step 1/1.</text>
</comment>
<comment type="subcellular location">
    <subcellularLocation>
        <location evidence="1">Cell inner membrane</location>
        <topology evidence="1">Multi-pass membrane protein</topology>
    </subcellularLocation>
</comment>
<comment type="miscellaneous">
    <text evidence="1">Carbon 2 of the heme B porphyrin ring is defined according to the Fischer nomenclature.</text>
</comment>
<comment type="similarity">
    <text evidence="1">Belongs to the UbiA prenyltransferase family. Protoheme IX farnesyltransferase subfamily.</text>
</comment>
<feature type="chain" id="PRO_0000326906" description="Protoheme IX farnesyltransferase">
    <location>
        <begin position="1"/>
        <end position="294"/>
    </location>
</feature>
<feature type="transmembrane region" description="Helical" evidence="1">
    <location>
        <begin position="24"/>
        <end position="44"/>
    </location>
</feature>
<feature type="transmembrane region" description="Helical" evidence="1">
    <location>
        <begin position="48"/>
        <end position="68"/>
    </location>
</feature>
<feature type="transmembrane region" description="Helical" evidence="1">
    <location>
        <begin position="96"/>
        <end position="116"/>
    </location>
</feature>
<feature type="transmembrane region" description="Helical" evidence="1">
    <location>
        <begin position="118"/>
        <end position="138"/>
    </location>
</feature>
<feature type="transmembrane region" description="Helical" evidence="1">
    <location>
        <begin position="145"/>
        <end position="165"/>
    </location>
</feature>
<feature type="transmembrane region" description="Helical" evidence="1">
    <location>
        <begin position="172"/>
        <end position="192"/>
    </location>
</feature>
<feature type="transmembrane region" description="Helical" evidence="1">
    <location>
        <begin position="211"/>
        <end position="231"/>
    </location>
</feature>
<feature type="transmembrane region" description="Helical" evidence="1">
    <location>
        <begin position="241"/>
        <end position="263"/>
    </location>
</feature>
<feature type="transmembrane region" description="Helical" evidence="1">
    <location>
        <begin position="268"/>
        <end position="288"/>
    </location>
</feature>
<proteinExistence type="inferred from homology"/>
<dbReference type="EC" id="2.5.1.141" evidence="1"/>
<dbReference type="EMBL" id="CR628337">
    <property type="protein sequence ID" value="CAH14685.1"/>
    <property type="molecule type" value="Genomic_DNA"/>
</dbReference>
<dbReference type="RefSeq" id="WP_011214674.1">
    <property type="nucleotide sequence ID" value="NC_006369.1"/>
</dbReference>
<dbReference type="SMR" id="Q5WZC7"/>
<dbReference type="KEGG" id="lpf:lpl0455"/>
<dbReference type="LegioList" id="lpl0455"/>
<dbReference type="HOGENOM" id="CLU_029631_0_2_6"/>
<dbReference type="UniPathway" id="UPA00834">
    <property type="reaction ID" value="UER00712"/>
</dbReference>
<dbReference type="Proteomes" id="UP000002517">
    <property type="component" value="Chromosome"/>
</dbReference>
<dbReference type="GO" id="GO:0005886">
    <property type="term" value="C:plasma membrane"/>
    <property type="evidence" value="ECO:0007669"/>
    <property type="project" value="UniProtKB-SubCell"/>
</dbReference>
<dbReference type="GO" id="GO:0008495">
    <property type="term" value="F:protoheme IX farnesyltransferase activity"/>
    <property type="evidence" value="ECO:0007669"/>
    <property type="project" value="UniProtKB-UniRule"/>
</dbReference>
<dbReference type="GO" id="GO:0048034">
    <property type="term" value="P:heme O biosynthetic process"/>
    <property type="evidence" value="ECO:0007669"/>
    <property type="project" value="UniProtKB-UniRule"/>
</dbReference>
<dbReference type="CDD" id="cd13957">
    <property type="entry name" value="PT_UbiA_Cox10"/>
    <property type="match status" value="1"/>
</dbReference>
<dbReference type="FunFam" id="1.10.357.140:FF:000001">
    <property type="entry name" value="Protoheme IX farnesyltransferase"/>
    <property type="match status" value="1"/>
</dbReference>
<dbReference type="Gene3D" id="1.10.357.140">
    <property type="entry name" value="UbiA prenyltransferase"/>
    <property type="match status" value="1"/>
</dbReference>
<dbReference type="HAMAP" id="MF_00154">
    <property type="entry name" value="CyoE_CtaB"/>
    <property type="match status" value="1"/>
</dbReference>
<dbReference type="InterPro" id="IPR006369">
    <property type="entry name" value="Protohaem_IX_farnesylTrfase"/>
</dbReference>
<dbReference type="InterPro" id="IPR000537">
    <property type="entry name" value="UbiA_prenyltransferase"/>
</dbReference>
<dbReference type="InterPro" id="IPR030470">
    <property type="entry name" value="UbiA_prenylTrfase_CS"/>
</dbReference>
<dbReference type="InterPro" id="IPR044878">
    <property type="entry name" value="UbiA_sf"/>
</dbReference>
<dbReference type="NCBIfam" id="TIGR01473">
    <property type="entry name" value="cyoE_ctaB"/>
    <property type="match status" value="1"/>
</dbReference>
<dbReference type="NCBIfam" id="NF003349">
    <property type="entry name" value="PRK04375.1-2"/>
    <property type="match status" value="1"/>
</dbReference>
<dbReference type="PANTHER" id="PTHR43448:SF7">
    <property type="entry name" value="4-HYDROXYBENZOATE SOLANESYLTRANSFERASE"/>
    <property type="match status" value="1"/>
</dbReference>
<dbReference type="PANTHER" id="PTHR43448">
    <property type="entry name" value="PROTOHEME IX FARNESYLTRANSFERASE, MITOCHONDRIAL"/>
    <property type="match status" value="1"/>
</dbReference>
<dbReference type="Pfam" id="PF01040">
    <property type="entry name" value="UbiA"/>
    <property type="match status" value="1"/>
</dbReference>
<dbReference type="PROSITE" id="PS00943">
    <property type="entry name" value="UBIA"/>
    <property type="match status" value="1"/>
</dbReference>
<sequence length="294" mass="33130">MRTEYADRLPVDWRDYVELCKPRVVLLMLLTVIVGMYLAAPGWVSLRLIAFTLLGIGLCAGSAAAINHLVDRHIDSIMARTKKRPVAYGRVSVKQALWFAVIIGLMGLSLLILFVNQLTALLTFITLIGYAGVYTGYLKRATSQNIVIGGLAGAAPPLLGWTAVTDQLDPQALLLVLIIFTWTPPHFWALAIYRYKEYQDAEIPMLPVTHGIQFTKLNIYLYTVLLLVVSLLPFVVSMSGWIYLLGALILGIRFLVWAHKLYFTDKPVVAMQTFRFSILYLMLLFVFLLVDHYF</sequence>
<name>CYOE_LEGPL</name>
<protein>
    <recommendedName>
        <fullName evidence="1">Protoheme IX farnesyltransferase</fullName>
        <ecNumber evidence="1">2.5.1.141</ecNumber>
    </recommendedName>
    <alternativeName>
        <fullName evidence="1">Heme B farnesyltransferase</fullName>
    </alternativeName>
    <alternativeName>
        <fullName evidence="1">Heme O synthase</fullName>
    </alternativeName>
</protein>
<keyword id="KW-0997">Cell inner membrane</keyword>
<keyword id="KW-1003">Cell membrane</keyword>
<keyword id="KW-0350">Heme biosynthesis</keyword>
<keyword id="KW-0472">Membrane</keyword>
<keyword id="KW-0808">Transferase</keyword>
<keyword id="KW-0812">Transmembrane</keyword>
<keyword id="KW-1133">Transmembrane helix</keyword>
<gene>
    <name evidence="1" type="primary">cyoE</name>
    <name type="ordered locus">lpl0455</name>
</gene>
<accession>Q5WZC7</accession>
<evidence type="ECO:0000255" key="1">
    <source>
        <dbReference type="HAMAP-Rule" id="MF_00154"/>
    </source>
</evidence>
<organism>
    <name type="scientific">Legionella pneumophila (strain Lens)</name>
    <dbReference type="NCBI Taxonomy" id="297245"/>
    <lineage>
        <taxon>Bacteria</taxon>
        <taxon>Pseudomonadati</taxon>
        <taxon>Pseudomonadota</taxon>
        <taxon>Gammaproteobacteria</taxon>
        <taxon>Legionellales</taxon>
        <taxon>Legionellaceae</taxon>
        <taxon>Legionella</taxon>
    </lineage>
</organism>